<name>RL7_NOSP7</name>
<gene>
    <name evidence="1" type="primary">rplL</name>
    <name evidence="1" type="synonym">rpl12</name>
    <name type="ordered locus">Npun_F5854</name>
</gene>
<proteinExistence type="inferred from homology"/>
<protein>
    <recommendedName>
        <fullName evidence="1">Large ribosomal subunit protein bL12</fullName>
    </recommendedName>
    <alternativeName>
        <fullName evidence="2">50S ribosomal protein L7/L12</fullName>
    </alternativeName>
</protein>
<feature type="chain" id="PRO_1000121464" description="Large ribosomal subunit protein bL12">
    <location>
        <begin position="1"/>
        <end position="130"/>
    </location>
</feature>
<reference key="1">
    <citation type="journal article" date="2013" name="Plant Physiol.">
        <title>A Nostoc punctiforme Sugar Transporter Necessary to Establish a Cyanobacterium-Plant Symbiosis.</title>
        <authorList>
            <person name="Ekman M."/>
            <person name="Picossi S."/>
            <person name="Campbell E.L."/>
            <person name="Meeks J.C."/>
            <person name="Flores E."/>
        </authorList>
    </citation>
    <scope>NUCLEOTIDE SEQUENCE [LARGE SCALE GENOMIC DNA]</scope>
    <source>
        <strain>ATCC 29133 / PCC 73102</strain>
    </source>
</reference>
<organism>
    <name type="scientific">Nostoc punctiforme (strain ATCC 29133 / PCC 73102)</name>
    <dbReference type="NCBI Taxonomy" id="63737"/>
    <lineage>
        <taxon>Bacteria</taxon>
        <taxon>Bacillati</taxon>
        <taxon>Cyanobacteriota</taxon>
        <taxon>Cyanophyceae</taxon>
        <taxon>Nostocales</taxon>
        <taxon>Nostocaceae</taxon>
        <taxon>Nostoc</taxon>
    </lineage>
</organism>
<keyword id="KW-1185">Reference proteome</keyword>
<keyword id="KW-0687">Ribonucleoprotein</keyword>
<keyword id="KW-0689">Ribosomal protein</keyword>
<accession>B2JA77</accession>
<evidence type="ECO:0000255" key="1">
    <source>
        <dbReference type="HAMAP-Rule" id="MF_00368"/>
    </source>
</evidence>
<evidence type="ECO:0000305" key="2"/>
<comment type="function">
    <text evidence="1">Forms part of the ribosomal stalk which helps the ribosome interact with GTP-bound translation factors. Is thus essential for accurate translation.</text>
</comment>
<comment type="subunit">
    <text evidence="1">Homodimer. Part of the ribosomal stalk of the 50S ribosomal subunit. Forms a multimeric L10(L12)X complex, where L10 forms an elongated spine to which 2 to 4 L12 dimers bind in a sequential fashion. Binds GTP-bound translation factors.</text>
</comment>
<comment type="similarity">
    <text evidence="1">Belongs to the bacterial ribosomal protein bL12 family.</text>
</comment>
<dbReference type="EMBL" id="CP001037">
    <property type="protein sequence ID" value="ACC84152.1"/>
    <property type="molecule type" value="Genomic_DNA"/>
</dbReference>
<dbReference type="RefSeq" id="WP_012412095.1">
    <property type="nucleotide sequence ID" value="NC_010628.1"/>
</dbReference>
<dbReference type="SMR" id="B2JA77"/>
<dbReference type="STRING" id="63737.Npun_F5854"/>
<dbReference type="EnsemblBacteria" id="ACC84152">
    <property type="protein sequence ID" value="ACC84152"/>
    <property type="gene ID" value="Npun_F5854"/>
</dbReference>
<dbReference type="KEGG" id="npu:Npun_F5854"/>
<dbReference type="eggNOG" id="COG0222">
    <property type="taxonomic scope" value="Bacteria"/>
</dbReference>
<dbReference type="HOGENOM" id="CLU_086499_3_0_3"/>
<dbReference type="OrthoDB" id="9811748at2"/>
<dbReference type="PhylomeDB" id="B2JA77"/>
<dbReference type="Proteomes" id="UP000001191">
    <property type="component" value="Chromosome"/>
</dbReference>
<dbReference type="GO" id="GO:0022625">
    <property type="term" value="C:cytosolic large ribosomal subunit"/>
    <property type="evidence" value="ECO:0007669"/>
    <property type="project" value="TreeGrafter"/>
</dbReference>
<dbReference type="GO" id="GO:0003729">
    <property type="term" value="F:mRNA binding"/>
    <property type="evidence" value="ECO:0007669"/>
    <property type="project" value="TreeGrafter"/>
</dbReference>
<dbReference type="GO" id="GO:0003735">
    <property type="term" value="F:structural constituent of ribosome"/>
    <property type="evidence" value="ECO:0007669"/>
    <property type="project" value="InterPro"/>
</dbReference>
<dbReference type="GO" id="GO:0006412">
    <property type="term" value="P:translation"/>
    <property type="evidence" value="ECO:0007669"/>
    <property type="project" value="UniProtKB-UniRule"/>
</dbReference>
<dbReference type="CDD" id="cd00387">
    <property type="entry name" value="Ribosomal_L7_L12"/>
    <property type="match status" value="1"/>
</dbReference>
<dbReference type="FunFam" id="3.30.1390.10:FF:000001">
    <property type="entry name" value="50S ribosomal protein L7/L12"/>
    <property type="match status" value="1"/>
</dbReference>
<dbReference type="Gene3D" id="3.30.1390.10">
    <property type="match status" value="1"/>
</dbReference>
<dbReference type="Gene3D" id="1.20.5.710">
    <property type="entry name" value="Single helix bin"/>
    <property type="match status" value="1"/>
</dbReference>
<dbReference type="HAMAP" id="MF_00368">
    <property type="entry name" value="Ribosomal_bL12"/>
    <property type="match status" value="1"/>
</dbReference>
<dbReference type="InterPro" id="IPR000206">
    <property type="entry name" value="Ribosomal_bL12"/>
</dbReference>
<dbReference type="InterPro" id="IPR013823">
    <property type="entry name" value="Ribosomal_bL12_C"/>
</dbReference>
<dbReference type="InterPro" id="IPR014719">
    <property type="entry name" value="Ribosomal_bL12_C/ClpS-like"/>
</dbReference>
<dbReference type="InterPro" id="IPR008932">
    <property type="entry name" value="Ribosomal_bL12_oligo"/>
</dbReference>
<dbReference type="InterPro" id="IPR036235">
    <property type="entry name" value="Ribosomal_bL12_oligo_N_sf"/>
</dbReference>
<dbReference type="NCBIfam" id="TIGR00855">
    <property type="entry name" value="L12"/>
    <property type="match status" value="1"/>
</dbReference>
<dbReference type="PANTHER" id="PTHR45987">
    <property type="entry name" value="39S RIBOSOMAL PROTEIN L12"/>
    <property type="match status" value="1"/>
</dbReference>
<dbReference type="PANTHER" id="PTHR45987:SF4">
    <property type="entry name" value="LARGE RIBOSOMAL SUBUNIT PROTEIN BL12M"/>
    <property type="match status" value="1"/>
</dbReference>
<dbReference type="Pfam" id="PF00542">
    <property type="entry name" value="Ribosomal_L12"/>
    <property type="match status" value="1"/>
</dbReference>
<dbReference type="Pfam" id="PF16320">
    <property type="entry name" value="Ribosomal_L12_N"/>
    <property type="match status" value="1"/>
</dbReference>
<dbReference type="SUPFAM" id="SSF54736">
    <property type="entry name" value="ClpS-like"/>
    <property type="match status" value="1"/>
</dbReference>
<dbReference type="SUPFAM" id="SSF48300">
    <property type="entry name" value="Ribosomal protein L7/12, oligomerisation (N-terminal) domain"/>
    <property type="match status" value="1"/>
</dbReference>
<sequence>MSAATDQILEQLKTLSLLEASELVKQIEEAFGVSAAAPVGGMMMMAGPGGAAPAEEAVEQTEFEVILDSVPADKKIAVLKIVRELTGLGLKEAKDLVEAAPKAVKEGIAKDAAEDAKKRIEEAGGKVTIK</sequence>